<proteinExistence type="inferred from homology"/>
<sequence length="326" mass="37773">MSRADEGRLIHLAKKREREKEDIEKQLRKLEEDKEKCKVGITSKFTANYETMEESVKSKTYGLVSLDDMKNIQKNEISNRDLQVARGASSSTSLAKDSQEAREKEEHVAKHTQKRVLSFAYEDEEEDEDAAPIVPKKRVGMDPTVDTSFLPDKEREEFLRKKKEELAAEWRVKQNTEKNEEITVAYAYWDGSSHRKNMKVKKGNTISQCLARAIEALKKEFTELKACTPENLMFVKEDLIIPHFYTFQDFIVTKAMGKTGPLFVFDSASDVRIRQDAALDYGESHPAKIVLRSWYEKNKHIYPASRWEPFVPSKKYGRNFDDLSDL</sequence>
<reference key="1">
    <citation type="journal article" date="2003" name="PLoS Biol.">
        <title>The genome sequence of Caenorhabditis briggsae: a platform for comparative genomics.</title>
        <authorList>
            <person name="Stein L.D."/>
            <person name="Bao Z."/>
            <person name="Blasiar D."/>
            <person name="Blumenthal T."/>
            <person name="Brent M.R."/>
            <person name="Chen N."/>
            <person name="Chinwalla A."/>
            <person name="Clarke L."/>
            <person name="Clee C."/>
            <person name="Coghlan A."/>
            <person name="Coulson A."/>
            <person name="D'Eustachio P."/>
            <person name="Fitch D.H.A."/>
            <person name="Fulton L.A."/>
            <person name="Fulton R.E."/>
            <person name="Griffiths-Jones S."/>
            <person name="Harris T.W."/>
            <person name="Hillier L.W."/>
            <person name="Kamath R."/>
            <person name="Kuwabara P.E."/>
            <person name="Mardis E.R."/>
            <person name="Marra M.A."/>
            <person name="Miner T.L."/>
            <person name="Minx P."/>
            <person name="Mullikin J.C."/>
            <person name="Plumb R.W."/>
            <person name="Rogers J."/>
            <person name="Schein J.E."/>
            <person name="Sohrmann M."/>
            <person name="Spieth J."/>
            <person name="Stajich J.E."/>
            <person name="Wei C."/>
            <person name="Willey D."/>
            <person name="Wilson R.K."/>
            <person name="Durbin R.M."/>
            <person name="Waterston R.H."/>
        </authorList>
    </citation>
    <scope>NUCLEOTIDE SEQUENCE [LARGE SCALE GENOMIC DNA]</scope>
    <source>
        <strain>AF16</strain>
    </source>
</reference>
<name>FAM50_CAEBR</name>
<keyword id="KW-1185">Reference proteome</keyword>
<gene>
    <name type="ORF">CBG04561</name>
</gene>
<comment type="similarity">
    <text evidence="2">Belongs to the FAM50 family.</text>
</comment>
<evidence type="ECO:0000256" key="1">
    <source>
        <dbReference type="SAM" id="MobiDB-lite"/>
    </source>
</evidence>
<evidence type="ECO:0000305" key="2"/>
<accession>A8WXX7</accession>
<organism>
    <name type="scientific">Caenorhabditis briggsae</name>
    <dbReference type="NCBI Taxonomy" id="6238"/>
    <lineage>
        <taxon>Eukaryota</taxon>
        <taxon>Metazoa</taxon>
        <taxon>Ecdysozoa</taxon>
        <taxon>Nematoda</taxon>
        <taxon>Chromadorea</taxon>
        <taxon>Rhabditida</taxon>
        <taxon>Rhabditina</taxon>
        <taxon>Rhabditomorpha</taxon>
        <taxon>Rhabditoidea</taxon>
        <taxon>Rhabditidae</taxon>
        <taxon>Peloderinae</taxon>
        <taxon>Caenorhabditis</taxon>
    </lineage>
</organism>
<feature type="chain" id="PRO_0000326513" description="Protein FAM50 homolog">
    <location>
        <begin position="1"/>
        <end position="326"/>
    </location>
</feature>
<feature type="region of interest" description="Disordered" evidence="1">
    <location>
        <begin position="76"/>
        <end position="112"/>
    </location>
</feature>
<feature type="compositionally biased region" description="Basic and acidic residues" evidence="1">
    <location>
        <begin position="97"/>
        <end position="109"/>
    </location>
</feature>
<protein>
    <recommendedName>
        <fullName>Protein FAM50 homolog</fullName>
    </recommendedName>
</protein>
<dbReference type="EMBL" id="HE601135">
    <property type="protein sequence ID" value="CAP25237.1"/>
    <property type="molecule type" value="Genomic_DNA"/>
</dbReference>
<dbReference type="RefSeq" id="XP_002637778.1">
    <property type="nucleotide sequence ID" value="XM_002637732.1"/>
</dbReference>
<dbReference type="SMR" id="A8WXX7"/>
<dbReference type="FunCoup" id="A8WXX7">
    <property type="interactions" value="1279"/>
</dbReference>
<dbReference type="STRING" id="6238.A8WXX7"/>
<dbReference type="EnsemblMetazoa" id="CBG04561a.1">
    <property type="protein sequence ID" value="CBG04561a.1"/>
    <property type="gene ID" value="WBGene00027206"/>
</dbReference>
<dbReference type="GeneID" id="8579775"/>
<dbReference type="KEGG" id="cbr:CBG_04561"/>
<dbReference type="CTD" id="8579775"/>
<dbReference type="WormBase" id="CBG04561a">
    <property type="protein sequence ID" value="CBP06832"/>
    <property type="gene ID" value="WBGene00027206"/>
</dbReference>
<dbReference type="eggNOG" id="KOG2894">
    <property type="taxonomic scope" value="Eukaryota"/>
</dbReference>
<dbReference type="HOGENOM" id="CLU_037985_1_0_1"/>
<dbReference type="InParanoid" id="A8WXX7"/>
<dbReference type="OMA" id="DFIWVFL"/>
<dbReference type="Proteomes" id="UP000008549">
    <property type="component" value="Unassembled WGS sequence"/>
</dbReference>
<dbReference type="GO" id="GO:0005634">
    <property type="term" value="C:nucleus"/>
    <property type="evidence" value="ECO:0000318"/>
    <property type="project" value="GO_Central"/>
</dbReference>
<dbReference type="GO" id="GO:0006325">
    <property type="term" value="P:chromatin organization"/>
    <property type="evidence" value="ECO:0000318"/>
    <property type="project" value="GO_Central"/>
</dbReference>
<dbReference type="InterPro" id="IPR048337">
    <property type="entry name" value="FAM50A/XAP5_C"/>
</dbReference>
<dbReference type="InterPro" id="IPR007005">
    <property type="entry name" value="XAP5"/>
</dbReference>
<dbReference type="PANTHER" id="PTHR12722:SF0">
    <property type="entry name" value="PROTEIN FAM50A"/>
    <property type="match status" value="1"/>
</dbReference>
<dbReference type="PANTHER" id="PTHR12722">
    <property type="entry name" value="XAP-5 PROTEIN-RELATED"/>
    <property type="match status" value="1"/>
</dbReference>
<dbReference type="Pfam" id="PF04921">
    <property type="entry name" value="XAP5"/>
    <property type="match status" value="1"/>
</dbReference>